<gene>
    <name evidence="2" type="primary">petA</name>
</gene>
<name>CYF_CERDE</name>
<accession>A8SEB6</accession>
<organism>
    <name type="scientific">Ceratophyllum demersum</name>
    <name type="common">Rigid hornwort</name>
    <name type="synonym">Coontail</name>
    <dbReference type="NCBI Taxonomy" id="4428"/>
    <lineage>
        <taxon>Eukaryota</taxon>
        <taxon>Viridiplantae</taxon>
        <taxon>Streptophyta</taxon>
        <taxon>Embryophyta</taxon>
        <taxon>Tracheophyta</taxon>
        <taxon>Spermatophyta</taxon>
        <taxon>Magnoliopsida</taxon>
        <taxon>Ceratophyllales</taxon>
        <taxon>Ceratophyllaceae</taxon>
        <taxon>Ceratophyllum</taxon>
    </lineage>
</organism>
<keyword id="KW-0150">Chloroplast</keyword>
<keyword id="KW-0249">Electron transport</keyword>
<keyword id="KW-0349">Heme</keyword>
<keyword id="KW-0408">Iron</keyword>
<keyword id="KW-0472">Membrane</keyword>
<keyword id="KW-0479">Metal-binding</keyword>
<keyword id="KW-0602">Photosynthesis</keyword>
<keyword id="KW-0934">Plastid</keyword>
<keyword id="KW-0732">Signal</keyword>
<keyword id="KW-0793">Thylakoid</keyword>
<keyword id="KW-0812">Transmembrane</keyword>
<keyword id="KW-1133">Transmembrane helix</keyword>
<keyword id="KW-0813">Transport</keyword>
<feature type="signal peptide" evidence="2">
    <location>
        <begin position="1"/>
        <end position="35"/>
    </location>
</feature>
<feature type="chain" id="PRO_0000342052" description="Cytochrome f">
    <location>
        <begin position="36"/>
        <end position="320"/>
    </location>
</feature>
<feature type="transmembrane region" description="Helical" evidence="2">
    <location>
        <begin position="286"/>
        <end position="306"/>
    </location>
</feature>
<feature type="binding site" description="axial binding residue" evidence="2">
    <location>
        <position position="36"/>
    </location>
    <ligand>
        <name>heme</name>
        <dbReference type="ChEBI" id="CHEBI:30413"/>
    </ligand>
    <ligandPart>
        <name>Fe</name>
        <dbReference type="ChEBI" id="CHEBI:18248"/>
    </ligandPart>
</feature>
<feature type="binding site" description="covalent" evidence="2">
    <location>
        <position position="56"/>
    </location>
    <ligand>
        <name>heme</name>
        <dbReference type="ChEBI" id="CHEBI:30413"/>
    </ligand>
</feature>
<feature type="binding site" description="covalent" evidence="2">
    <location>
        <position position="59"/>
    </location>
    <ligand>
        <name>heme</name>
        <dbReference type="ChEBI" id="CHEBI:30413"/>
    </ligand>
</feature>
<feature type="binding site" description="axial binding residue" evidence="2">
    <location>
        <position position="60"/>
    </location>
    <ligand>
        <name>heme</name>
        <dbReference type="ChEBI" id="CHEBI:30413"/>
    </ligand>
    <ligandPart>
        <name>Fe</name>
        <dbReference type="ChEBI" id="CHEBI:18248"/>
    </ligandPart>
</feature>
<comment type="function">
    <text evidence="2">Component of the cytochrome b6-f complex, which mediates electron transfer between photosystem II (PSII) and photosystem I (PSI), cyclic electron flow around PSI, and state transitions.</text>
</comment>
<comment type="cofactor">
    <cofactor evidence="2">
        <name>heme</name>
        <dbReference type="ChEBI" id="CHEBI:30413"/>
    </cofactor>
    <text evidence="2">Binds 1 heme group covalently.</text>
</comment>
<comment type="subunit">
    <text evidence="1">The 4 large subunits of the cytochrome b6-f complex are cytochrome b6, subunit IV (17 kDa polypeptide, petD), cytochrome f and the Rieske protein, while the 4 small subunits are PetG, PetL, PetM and PetN. The complex functions as a dimer (By similarity).</text>
</comment>
<comment type="subcellular location">
    <subcellularLocation>
        <location evidence="2">Plastid</location>
        <location evidence="2">Chloroplast thylakoid membrane</location>
        <topology evidence="2">Single-pass membrane protein</topology>
    </subcellularLocation>
</comment>
<comment type="similarity">
    <text evidence="2">Belongs to the cytochrome f family.</text>
</comment>
<geneLocation type="chloroplast"/>
<protein>
    <recommendedName>
        <fullName evidence="2">Cytochrome f</fullName>
    </recommendedName>
</protein>
<proteinExistence type="inferred from homology"/>
<reference key="1">
    <citation type="journal article" date="2007" name="Proc. Natl. Acad. Sci. U.S.A.">
        <title>Using plastid genome-scale data to resolve enigmatic relationships among basal angiosperms.</title>
        <authorList>
            <person name="Moore M.J."/>
            <person name="Bell C.D."/>
            <person name="Soltis P.S."/>
            <person name="Soltis D.E."/>
        </authorList>
    </citation>
    <scope>NUCLEOTIDE SEQUENCE [LARGE SCALE GENOMIC DNA]</scope>
</reference>
<evidence type="ECO:0000250" key="1"/>
<evidence type="ECO:0000255" key="2">
    <source>
        <dbReference type="HAMAP-Rule" id="MF_00610"/>
    </source>
</evidence>
<sequence>MQNRNTFSWVKDQMSRFISVSIMIYVITRTSISNAYPIFAQQGYENPREATGRIVCANCHLANKPVDIEVPQAVLPDTVFEAVVRIPYDMQLKQVLANGKKGGLNVGAVLILPEGFELAPPDRISPEMKEKIGNLSFQSYRPNKKNILIMGPVPGKKYSQIVFPILSPDPATKKDVHFLKYPIYVGGNRGRGQIYPDGSKSNNTVYNATATGIVSKIVRKEKGGYEITIADTADGHQVVDIIPPGPELLVSEGESIKIDQPLTSNPNVGGFGQGDAEIVLQDPLRVQGLLFFFASVILAQIFLVLKKKQFEKVQLSEMNF</sequence>
<dbReference type="EMBL" id="EF614270">
    <property type="protein sequence ID" value="ABQ81463.1"/>
    <property type="molecule type" value="Genomic_DNA"/>
</dbReference>
<dbReference type="RefSeq" id="YP_001542460.1">
    <property type="nucleotide sequence ID" value="NC_009962.1"/>
</dbReference>
<dbReference type="SMR" id="A8SEB6"/>
<dbReference type="GeneID" id="5729405"/>
<dbReference type="GO" id="GO:0009535">
    <property type="term" value="C:chloroplast thylakoid membrane"/>
    <property type="evidence" value="ECO:0007669"/>
    <property type="project" value="UniProtKB-SubCell"/>
</dbReference>
<dbReference type="GO" id="GO:0009055">
    <property type="term" value="F:electron transfer activity"/>
    <property type="evidence" value="ECO:0007669"/>
    <property type="project" value="UniProtKB-UniRule"/>
</dbReference>
<dbReference type="GO" id="GO:0020037">
    <property type="term" value="F:heme binding"/>
    <property type="evidence" value="ECO:0007669"/>
    <property type="project" value="InterPro"/>
</dbReference>
<dbReference type="GO" id="GO:0005506">
    <property type="term" value="F:iron ion binding"/>
    <property type="evidence" value="ECO:0007669"/>
    <property type="project" value="InterPro"/>
</dbReference>
<dbReference type="GO" id="GO:0015979">
    <property type="term" value="P:photosynthesis"/>
    <property type="evidence" value="ECO:0007669"/>
    <property type="project" value="UniProtKB-UniRule"/>
</dbReference>
<dbReference type="FunFam" id="1.20.5.700:FF:000001">
    <property type="entry name" value="Cytochrome f"/>
    <property type="match status" value="1"/>
</dbReference>
<dbReference type="FunFam" id="2.40.50.100:FF:000007">
    <property type="entry name" value="Cytochrome f"/>
    <property type="match status" value="1"/>
</dbReference>
<dbReference type="FunFam" id="2.60.40.830:FF:000001">
    <property type="entry name" value="Cytochrome f"/>
    <property type="match status" value="1"/>
</dbReference>
<dbReference type="Gene3D" id="2.40.50.100">
    <property type="match status" value="1"/>
</dbReference>
<dbReference type="Gene3D" id="2.60.40.830">
    <property type="entry name" value="Cytochrome f large domain"/>
    <property type="match status" value="1"/>
</dbReference>
<dbReference type="Gene3D" id="1.20.5.700">
    <property type="entry name" value="Single helix bin"/>
    <property type="match status" value="1"/>
</dbReference>
<dbReference type="HAMAP" id="MF_00610">
    <property type="entry name" value="Cytb6_f_cytF"/>
    <property type="match status" value="1"/>
</dbReference>
<dbReference type="InterPro" id="IPR024058">
    <property type="entry name" value="Cyt-f_TM"/>
</dbReference>
<dbReference type="InterPro" id="IPR002325">
    <property type="entry name" value="Cyt_f"/>
</dbReference>
<dbReference type="InterPro" id="IPR024094">
    <property type="entry name" value="Cyt_f_lg_dom"/>
</dbReference>
<dbReference type="InterPro" id="IPR036826">
    <property type="entry name" value="Cyt_f_lg_dom_sf"/>
</dbReference>
<dbReference type="InterPro" id="IPR011054">
    <property type="entry name" value="Rudment_hybrid_motif"/>
</dbReference>
<dbReference type="PANTHER" id="PTHR33288">
    <property type="match status" value="1"/>
</dbReference>
<dbReference type="PANTHER" id="PTHR33288:SF10">
    <property type="entry name" value="CYTOCHROME F"/>
    <property type="match status" value="1"/>
</dbReference>
<dbReference type="Pfam" id="PF01333">
    <property type="entry name" value="Apocytochr_F_C"/>
    <property type="match status" value="1"/>
</dbReference>
<dbReference type="Pfam" id="PF16639">
    <property type="entry name" value="Apocytochr_F_N"/>
    <property type="match status" value="1"/>
</dbReference>
<dbReference type="PRINTS" id="PR00610">
    <property type="entry name" value="CYTOCHROMEF"/>
</dbReference>
<dbReference type="SUPFAM" id="SSF103431">
    <property type="entry name" value="Cytochrome f subunit of the cytochrome b6f complex, transmembrane anchor"/>
    <property type="match status" value="1"/>
</dbReference>
<dbReference type="SUPFAM" id="SSF49441">
    <property type="entry name" value="Cytochrome f, large domain"/>
    <property type="match status" value="1"/>
</dbReference>
<dbReference type="SUPFAM" id="SSF51246">
    <property type="entry name" value="Rudiment single hybrid motif"/>
    <property type="match status" value="1"/>
</dbReference>
<dbReference type="PROSITE" id="PS51010">
    <property type="entry name" value="CYTF"/>
    <property type="match status" value="1"/>
</dbReference>